<evidence type="ECO:0000255" key="1">
    <source>
        <dbReference type="HAMAP-Rule" id="MF_00443"/>
    </source>
</evidence>
<dbReference type="EC" id="2.8.1.10" evidence="1"/>
<dbReference type="EMBL" id="CP000814">
    <property type="protein sequence ID" value="ABV52581.1"/>
    <property type="molecule type" value="Genomic_DNA"/>
</dbReference>
<dbReference type="RefSeq" id="WP_002866076.1">
    <property type="nucleotide sequence ID" value="NC_009839.1"/>
</dbReference>
<dbReference type="SMR" id="A8FM94"/>
<dbReference type="KEGG" id="cju:C8J_0982"/>
<dbReference type="HOGENOM" id="CLU_062233_1_0_7"/>
<dbReference type="UniPathway" id="UPA00060"/>
<dbReference type="GO" id="GO:0005737">
    <property type="term" value="C:cytoplasm"/>
    <property type="evidence" value="ECO:0007669"/>
    <property type="project" value="UniProtKB-SubCell"/>
</dbReference>
<dbReference type="GO" id="GO:1990107">
    <property type="term" value="F:thiazole synthase activity"/>
    <property type="evidence" value="ECO:0007669"/>
    <property type="project" value="UniProtKB-EC"/>
</dbReference>
<dbReference type="GO" id="GO:0009229">
    <property type="term" value="P:thiamine diphosphate biosynthetic process"/>
    <property type="evidence" value="ECO:0007669"/>
    <property type="project" value="UniProtKB-UniRule"/>
</dbReference>
<dbReference type="CDD" id="cd04728">
    <property type="entry name" value="ThiG"/>
    <property type="match status" value="1"/>
</dbReference>
<dbReference type="Gene3D" id="3.20.20.70">
    <property type="entry name" value="Aldolase class I"/>
    <property type="match status" value="1"/>
</dbReference>
<dbReference type="HAMAP" id="MF_00443">
    <property type="entry name" value="ThiG"/>
    <property type="match status" value="1"/>
</dbReference>
<dbReference type="InterPro" id="IPR013785">
    <property type="entry name" value="Aldolase_TIM"/>
</dbReference>
<dbReference type="InterPro" id="IPR033983">
    <property type="entry name" value="Thiazole_synthase_ThiG"/>
</dbReference>
<dbReference type="InterPro" id="IPR008867">
    <property type="entry name" value="ThiG"/>
</dbReference>
<dbReference type="PANTHER" id="PTHR34266">
    <property type="entry name" value="THIAZOLE SYNTHASE"/>
    <property type="match status" value="1"/>
</dbReference>
<dbReference type="PANTHER" id="PTHR34266:SF2">
    <property type="entry name" value="THIAZOLE SYNTHASE"/>
    <property type="match status" value="1"/>
</dbReference>
<dbReference type="Pfam" id="PF05690">
    <property type="entry name" value="ThiG"/>
    <property type="match status" value="1"/>
</dbReference>
<dbReference type="SUPFAM" id="SSF110399">
    <property type="entry name" value="ThiG-like"/>
    <property type="match status" value="1"/>
</dbReference>
<protein>
    <recommendedName>
        <fullName evidence="1">Thiazole synthase</fullName>
        <ecNumber evidence="1">2.8.1.10</ecNumber>
    </recommendedName>
</protein>
<proteinExistence type="inferred from homology"/>
<sequence>MQENLKNDKLKIGKYEFDSRFILGSGKYSLELIKSAIEEAKTQIITLALRRANTGEIANILDYIPKNITLLPNTSGARNADEALRIARLSRELGCGELIKIEVISDSRYLLPDNYETIKACELLAKEGFTPLPYMHADLYAARAMRDAGAAAIMPLAAPIGSNKGLCAKEFIQILLNEIDLPIIVDAGIGSPSQACEAMQMGVSAVMVNTAIAEAKDVALMAKAFSLAVNAGRAAFLAGLASVSKAKASSPLTGFLRD</sequence>
<organism>
    <name type="scientific">Campylobacter jejuni subsp. jejuni serotype O:6 (strain 81116 / NCTC 11828)</name>
    <dbReference type="NCBI Taxonomy" id="407148"/>
    <lineage>
        <taxon>Bacteria</taxon>
        <taxon>Pseudomonadati</taxon>
        <taxon>Campylobacterota</taxon>
        <taxon>Epsilonproteobacteria</taxon>
        <taxon>Campylobacterales</taxon>
        <taxon>Campylobacteraceae</taxon>
        <taxon>Campylobacter</taxon>
    </lineage>
</organism>
<keyword id="KW-0963">Cytoplasm</keyword>
<keyword id="KW-0704">Schiff base</keyword>
<keyword id="KW-0784">Thiamine biosynthesis</keyword>
<keyword id="KW-0808">Transferase</keyword>
<gene>
    <name evidence="1" type="primary">thiG</name>
    <name type="ordered locus">C8J_0982</name>
</gene>
<reference key="1">
    <citation type="journal article" date="2007" name="J. Bacteriol.">
        <title>The complete genome sequence of Campylobacter jejuni strain 81116 (NCTC11828).</title>
        <authorList>
            <person name="Pearson B.M."/>
            <person name="Gaskin D.J.H."/>
            <person name="Segers R.P.A.M."/>
            <person name="Wells J.M."/>
            <person name="Nuijten P.J.M."/>
            <person name="van Vliet A.H.M."/>
        </authorList>
    </citation>
    <scope>NUCLEOTIDE SEQUENCE [LARGE SCALE GENOMIC DNA]</scope>
    <source>
        <strain>81116 / NCTC 11828</strain>
    </source>
</reference>
<comment type="function">
    <text evidence="1">Catalyzes the rearrangement of 1-deoxy-D-xylulose 5-phosphate (DXP) to produce the thiazole phosphate moiety of thiamine. Sulfur is provided by the thiocarboxylate moiety of the carrier protein ThiS. In vitro, sulfur can be provided by H(2)S.</text>
</comment>
<comment type="catalytic activity">
    <reaction evidence="1">
        <text>[ThiS sulfur-carrier protein]-C-terminal-Gly-aminoethanethioate + 2-iminoacetate + 1-deoxy-D-xylulose 5-phosphate = [ThiS sulfur-carrier protein]-C-terminal Gly-Gly + 2-[(2R,5Z)-2-carboxy-4-methylthiazol-5(2H)-ylidene]ethyl phosphate + 2 H2O + H(+)</text>
        <dbReference type="Rhea" id="RHEA:26297"/>
        <dbReference type="Rhea" id="RHEA-COMP:12909"/>
        <dbReference type="Rhea" id="RHEA-COMP:19908"/>
        <dbReference type="ChEBI" id="CHEBI:15377"/>
        <dbReference type="ChEBI" id="CHEBI:15378"/>
        <dbReference type="ChEBI" id="CHEBI:57792"/>
        <dbReference type="ChEBI" id="CHEBI:62899"/>
        <dbReference type="ChEBI" id="CHEBI:77846"/>
        <dbReference type="ChEBI" id="CHEBI:90778"/>
        <dbReference type="ChEBI" id="CHEBI:232372"/>
        <dbReference type="EC" id="2.8.1.10"/>
    </reaction>
</comment>
<comment type="pathway">
    <text evidence="1">Cofactor biosynthesis; thiamine diphosphate biosynthesis.</text>
</comment>
<comment type="subunit">
    <text evidence="1">Homotetramer. Forms heterodimers with either ThiH or ThiS.</text>
</comment>
<comment type="subcellular location">
    <subcellularLocation>
        <location evidence="1">Cytoplasm</location>
    </subcellularLocation>
</comment>
<comment type="similarity">
    <text evidence="1">Belongs to the ThiG family.</text>
</comment>
<feature type="chain" id="PRO_1000124608" description="Thiazole synthase">
    <location>
        <begin position="1"/>
        <end position="258"/>
    </location>
</feature>
<feature type="active site" description="Schiff-base intermediate with DXP" evidence="1">
    <location>
        <position position="100"/>
    </location>
</feature>
<feature type="binding site" evidence="1">
    <location>
        <position position="161"/>
    </location>
    <ligand>
        <name>1-deoxy-D-xylulose 5-phosphate</name>
        <dbReference type="ChEBI" id="CHEBI:57792"/>
    </ligand>
</feature>
<feature type="binding site" evidence="1">
    <location>
        <begin position="187"/>
        <end position="188"/>
    </location>
    <ligand>
        <name>1-deoxy-D-xylulose 5-phosphate</name>
        <dbReference type="ChEBI" id="CHEBI:57792"/>
    </ligand>
</feature>
<feature type="binding site" evidence="1">
    <location>
        <begin position="209"/>
        <end position="210"/>
    </location>
    <ligand>
        <name>1-deoxy-D-xylulose 5-phosphate</name>
        <dbReference type="ChEBI" id="CHEBI:57792"/>
    </ligand>
</feature>
<accession>A8FM94</accession>
<name>THIG_CAMJ8</name>